<protein>
    <recommendedName>
        <fullName evidence="1">Glycine dehydrogenase (decarboxylating)</fullName>
        <ecNumber evidence="1">1.4.4.2</ecNumber>
    </recommendedName>
    <alternativeName>
        <fullName evidence="1">Glycine cleavage system P-protein</fullName>
    </alternativeName>
    <alternativeName>
        <fullName evidence="1">Glycine decarboxylase</fullName>
    </alternativeName>
    <alternativeName>
        <fullName evidence="1">Glycine dehydrogenase (aminomethyl-transferring)</fullName>
    </alternativeName>
</protein>
<accession>B1IT99</accession>
<sequence length="957" mass="104296">MTQTLSQLENSGAFIERHIGPDAAQQQEMLNAVGAQSLNALTGQIVPKDIQLATPPQVGAPATEYAALAELKAIASRNKRFTSYIGMGYTAVQLPPVILRNMLENPGWYTAYTPYQPEVSQGRLEALLNFQQVTLDLTGLDMASASLLDEATAAAEAMAMAKRVSKLKNANRFFVASDVHPQTLDVVRTRAETFGFEVIVDDAQKVLDHQDVFGVLLQQVGTTGEIHDYTALISELKSRKIVVSVAADIMALVLLTAPGKQGADIVFGSAQRFGVPMGYGGPHAAFFAAKDEYKRSMPGRIIGVSKDAAGNTALRMAMQTREQHIRREKANSNICTSQVLLANIASLYAVYHGPVGLKRIANRIHRLTDILAAGLQQKGLKLRHAHYFDTLCVEVADKAGVLTRAEAAEINLRSDILNAVGITLDETTTRENVMQLFSVLLGDNHGLDIDTLDKDVAHDSRSIQPAMLRDDEILTHPVFNRYHSETEMMRYMHSLERKDLALNQAMIPLGSCTMKLNAAAEMIPITWPEFAELHPFCPPEQAEGYQQMIAQLADWLVKLTGYDAVCMQPNSGAQGEYAGLLAIRHYHESCNEGHRDICLIPASAHGTNPASAHMAGMQVVVVACDKNGNIDLTDLRAKAEQAGDNLSCIMVTYPSTHGVYEETIREVCEVVHQFGGQVYLDGANMNAQVGITSPGFIGADVSHLNLHKTFCIPHGGGGPGMGPIGVKAHLAPFVPGHSVVQIEGMLTRQGAVSAAPFGSASILPISWMYIRMMGAEGLKKASQVAILNANYIASRLQDAFPVLYTGRDGRVAHECILDIRPLKEETGISELDIAKRLIDYGFHAPTMSFPVAGTLMVEPTESESKVELDRFIDAMLAIRAEIDQVKAGVWPLEDNPLVNAPHIQSELVAEWAHPYSREVAVFPAGVADKYWPTVKRLDDVYGDRNLFCSCVPISEYQ</sequence>
<evidence type="ECO:0000255" key="1">
    <source>
        <dbReference type="HAMAP-Rule" id="MF_00711"/>
    </source>
</evidence>
<keyword id="KW-0560">Oxidoreductase</keyword>
<keyword id="KW-0663">Pyridoxal phosphate</keyword>
<comment type="function">
    <text evidence="1">The glycine cleavage system catalyzes the degradation of glycine. The P protein binds the alpha-amino group of glycine through its pyridoxal phosphate cofactor; CO(2) is released and the remaining methylamine moiety is then transferred to the lipoamide cofactor of the H protein.</text>
</comment>
<comment type="catalytic activity">
    <reaction evidence="1">
        <text>N(6)-[(R)-lipoyl]-L-lysyl-[glycine-cleavage complex H protein] + glycine + H(+) = N(6)-[(R)-S(8)-aminomethyldihydrolipoyl]-L-lysyl-[glycine-cleavage complex H protein] + CO2</text>
        <dbReference type="Rhea" id="RHEA:24304"/>
        <dbReference type="Rhea" id="RHEA-COMP:10494"/>
        <dbReference type="Rhea" id="RHEA-COMP:10495"/>
        <dbReference type="ChEBI" id="CHEBI:15378"/>
        <dbReference type="ChEBI" id="CHEBI:16526"/>
        <dbReference type="ChEBI" id="CHEBI:57305"/>
        <dbReference type="ChEBI" id="CHEBI:83099"/>
        <dbReference type="ChEBI" id="CHEBI:83143"/>
        <dbReference type="EC" id="1.4.4.2"/>
    </reaction>
</comment>
<comment type="cofactor">
    <cofactor evidence="1">
        <name>pyridoxal 5'-phosphate</name>
        <dbReference type="ChEBI" id="CHEBI:597326"/>
    </cofactor>
</comment>
<comment type="subunit">
    <text evidence="1">The glycine cleavage system is composed of four proteins: P, T, L and H.</text>
</comment>
<comment type="similarity">
    <text evidence="1">Belongs to the GcvP family.</text>
</comment>
<proteinExistence type="inferred from homology"/>
<dbReference type="EC" id="1.4.4.2" evidence="1"/>
<dbReference type="EMBL" id="CP000946">
    <property type="protein sequence ID" value="ACA76478.1"/>
    <property type="molecule type" value="Genomic_DNA"/>
</dbReference>
<dbReference type="RefSeq" id="WP_000195064.1">
    <property type="nucleotide sequence ID" value="NC_010468.1"/>
</dbReference>
<dbReference type="SMR" id="B1IT99"/>
<dbReference type="KEGG" id="ecl:EcolC_0806"/>
<dbReference type="HOGENOM" id="CLU_004620_1_1_6"/>
<dbReference type="GO" id="GO:0005829">
    <property type="term" value="C:cytosol"/>
    <property type="evidence" value="ECO:0007669"/>
    <property type="project" value="TreeGrafter"/>
</dbReference>
<dbReference type="GO" id="GO:0005960">
    <property type="term" value="C:glycine cleavage complex"/>
    <property type="evidence" value="ECO:0007669"/>
    <property type="project" value="TreeGrafter"/>
</dbReference>
<dbReference type="GO" id="GO:0016594">
    <property type="term" value="F:glycine binding"/>
    <property type="evidence" value="ECO:0007669"/>
    <property type="project" value="TreeGrafter"/>
</dbReference>
<dbReference type="GO" id="GO:0004375">
    <property type="term" value="F:glycine dehydrogenase (decarboxylating) activity"/>
    <property type="evidence" value="ECO:0007669"/>
    <property type="project" value="UniProtKB-EC"/>
</dbReference>
<dbReference type="GO" id="GO:0030170">
    <property type="term" value="F:pyridoxal phosphate binding"/>
    <property type="evidence" value="ECO:0007669"/>
    <property type="project" value="TreeGrafter"/>
</dbReference>
<dbReference type="GO" id="GO:0019464">
    <property type="term" value="P:glycine decarboxylation via glycine cleavage system"/>
    <property type="evidence" value="ECO:0007669"/>
    <property type="project" value="UniProtKB-UniRule"/>
</dbReference>
<dbReference type="CDD" id="cd00613">
    <property type="entry name" value="GDC-P"/>
    <property type="match status" value="2"/>
</dbReference>
<dbReference type="FunFam" id="3.40.640.10:FF:000005">
    <property type="entry name" value="Glycine dehydrogenase (decarboxylating), mitochondrial"/>
    <property type="match status" value="1"/>
</dbReference>
<dbReference type="FunFam" id="3.90.1150.10:FF:000007">
    <property type="entry name" value="Glycine dehydrogenase (decarboxylating), mitochondrial"/>
    <property type="match status" value="1"/>
</dbReference>
<dbReference type="FunFam" id="3.40.640.10:FF:000007">
    <property type="entry name" value="glycine dehydrogenase (Decarboxylating), mitochondrial"/>
    <property type="match status" value="1"/>
</dbReference>
<dbReference type="Gene3D" id="3.90.1150.10">
    <property type="entry name" value="Aspartate Aminotransferase, domain 1"/>
    <property type="match status" value="1"/>
</dbReference>
<dbReference type="Gene3D" id="3.40.640.10">
    <property type="entry name" value="Type I PLP-dependent aspartate aminotransferase-like (Major domain)"/>
    <property type="match status" value="2"/>
</dbReference>
<dbReference type="HAMAP" id="MF_00711">
    <property type="entry name" value="GcvP"/>
    <property type="match status" value="1"/>
</dbReference>
<dbReference type="InterPro" id="IPR003437">
    <property type="entry name" value="GcvP"/>
</dbReference>
<dbReference type="InterPro" id="IPR049316">
    <property type="entry name" value="GDC-P_C"/>
</dbReference>
<dbReference type="InterPro" id="IPR049315">
    <property type="entry name" value="GDC-P_N"/>
</dbReference>
<dbReference type="InterPro" id="IPR020581">
    <property type="entry name" value="GDC_P"/>
</dbReference>
<dbReference type="InterPro" id="IPR015424">
    <property type="entry name" value="PyrdxlP-dep_Trfase"/>
</dbReference>
<dbReference type="InterPro" id="IPR015421">
    <property type="entry name" value="PyrdxlP-dep_Trfase_major"/>
</dbReference>
<dbReference type="InterPro" id="IPR015422">
    <property type="entry name" value="PyrdxlP-dep_Trfase_small"/>
</dbReference>
<dbReference type="NCBIfam" id="TIGR00461">
    <property type="entry name" value="gcvP"/>
    <property type="match status" value="1"/>
</dbReference>
<dbReference type="NCBIfam" id="NF003346">
    <property type="entry name" value="PRK04366.1"/>
    <property type="match status" value="1"/>
</dbReference>
<dbReference type="PANTHER" id="PTHR11773:SF13">
    <property type="entry name" value="GLYCINE DEHYDROGENASE (DECARBOXYLATING)"/>
    <property type="match status" value="1"/>
</dbReference>
<dbReference type="PANTHER" id="PTHR11773">
    <property type="entry name" value="GLYCINE DEHYDROGENASE, DECARBOXYLATING"/>
    <property type="match status" value="1"/>
</dbReference>
<dbReference type="Pfam" id="PF21478">
    <property type="entry name" value="GcvP2_C"/>
    <property type="match status" value="1"/>
</dbReference>
<dbReference type="Pfam" id="PF02347">
    <property type="entry name" value="GDC-P"/>
    <property type="match status" value="2"/>
</dbReference>
<dbReference type="SUPFAM" id="SSF53383">
    <property type="entry name" value="PLP-dependent transferases"/>
    <property type="match status" value="2"/>
</dbReference>
<feature type="chain" id="PRO_1000083206" description="Glycine dehydrogenase (decarboxylating)">
    <location>
        <begin position="1"/>
        <end position="957"/>
    </location>
</feature>
<feature type="modified residue" description="N6-(pyridoxal phosphate)lysine" evidence="1">
    <location>
        <position position="708"/>
    </location>
</feature>
<name>GCSP_ECOLC</name>
<reference key="1">
    <citation type="submission" date="2008-02" db="EMBL/GenBank/DDBJ databases">
        <title>Complete sequence of Escherichia coli C str. ATCC 8739.</title>
        <authorList>
            <person name="Copeland A."/>
            <person name="Lucas S."/>
            <person name="Lapidus A."/>
            <person name="Glavina del Rio T."/>
            <person name="Dalin E."/>
            <person name="Tice H."/>
            <person name="Bruce D."/>
            <person name="Goodwin L."/>
            <person name="Pitluck S."/>
            <person name="Kiss H."/>
            <person name="Brettin T."/>
            <person name="Detter J.C."/>
            <person name="Han C."/>
            <person name="Kuske C.R."/>
            <person name="Schmutz J."/>
            <person name="Larimer F."/>
            <person name="Land M."/>
            <person name="Hauser L."/>
            <person name="Kyrpides N."/>
            <person name="Mikhailova N."/>
            <person name="Ingram L."/>
            <person name="Richardson P."/>
        </authorList>
    </citation>
    <scope>NUCLEOTIDE SEQUENCE [LARGE SCALE GENOMIC DNA]</scope>
    <source>
        <strain>ATCC 8739 / DSM 1576 / NBRC 3972 / NCIMB 8545 / WDCM 00012 / Crooks</strain>
    </source>
</reference>
<organism>
    <name type="scientific">Escherichia coli (strain ATCC 8739 / DSM 1576 / NBRC 3972 / NCIMB 8545 / WDCM 00012 / Crooks)</name>
    <dbReference type="NCBI Taxonomy" id="481805"/>
    <lineage>
        <taxon>Bacteria</taxon>
        <taxon>Pseudomonadati</taxon>
        <taxon>Pseudomonadota</taxon>
        <taxon>Gammaproteobacteria</taxon>
        <taxon>Enterobacterales</taxon>
        <taxon>Enterobacteriaceae</taxon>
        <taxon>Escherichia</taxon>
    </lineage>
</organism>
<gene>
    <name evidence="1" type="primary">gcvP</name>
    <name type="ordered locus">EcolC_0806</name>
</gene>